<gene>
    <name type="primary">CCL2</name>
    <name type="synonym">MCP1</name>
    <name type="synonym">SCYA2</name>
</gene>
<keyword id="KW-0145">Chemotaxis</keyword>
<keyword id="KW-0202">Cytokine</keyword>
<keyword id="KW-1015">Disulfide bond</keyword>
<keyword id="KW-0325">Glycoprotein</keyword>
<keyword id="KW-0395">Inflammatory response</keyword>
<keyword id="KW-0873">Pyrrolidone carboxylic acid</keyword>
<keyword id="KW-1185">Reference proteome</keyword>
<keyword id="KW-0964">Secreted</keyword>
<keyword id="KW-0732">Signal</keyword>
<accession>P61274</accession>
<accession>Q9MYN4</accession>
<proteinExistence type="inferred from homology"/>
<feature type="signal peptide" evidence="1">
    <location>
        <begin position="1"/>
        <end position="23"/>
    </location>
</feature>
<feature type="chain" id="PRO_0000005147" description="C-C motif chemokine 2">
    <location>
        <begin position="24"/>
        <end position="99"/>
    </location>
</feature>
<feature type="modified residue" description="Pyrrolidone carboxylic acid" evidence="3">
    <location>
        <position position="24"/>
    </location>
</feature>
<feature type="glycosylation site" description="N-linked (GlcNAc...) asparagine" evidence="4">
    <location>
        <position position="37"/>
    </location>
</feature>
<feature type="disulfide bond" evidence="1">
    <location>
        <begin position="34"/>
        <end position="59"/>
    </location>
</feature>
<feature type="disulfide bond" evidence="1">
    <location>
        <begin position="35"/>
        <end position="75"/>
    </location>
</feature>
<name>CCL2_MACFA</name>
<comment type="function">
    <text evidence="2 3">Acts as a ligand for C-C chemokine receptor CCR2 (By similarity). Signals through binding and activation of CCR2 and induces a strong chemotactic response and mobilization of intracellular calcium ions (By similarity). Exhibits a chemotactic activity for monocytes and basophils but not neutrophils or eosinophils (By similarity). Plays an important role in mediating peripheral nerve injury-induced neuropathic pain (By similarity). Increases NMDA-mediated synaptic transmission in both dopamine D1 and D2 receptor-containing neurons, which may be caused by MAPK/ERK-dependent phosphorylation of GRIN2B/NMDAR2B (By similarity).</text>
</comment>
<comment type="subunit">
    <text evidence="3">Monomer or homodimer; in equilibrium. Is tethered on endothelial cells by glycosaminoglycan (GAG) side chains of proteoglycans. Interacts with TNFAIP6 (via Link domain).</text>
</comment>
<comment type="subcellular location">
    <subcellularLocation>
        <location evidence="3">Secreted</location>
    </subcellularLocation>
</comment>
<comment type="PTM">
    <text evidence="3">Processing at the N-terminus can regulate receptor and target cell selectivity (By similarity). Deletion of the N-terminal residue converts it from an activator of basophil to an eosinophil chemoattractant (By similarity).</text>
</comment>
<comment type="PTM">
    <text evidence="3">N-Glycosylated.</text>
</comment>
<comment type="similarity">
    <text evidence="5">Belongs to the intercrine beta (chemokine CC) family.</text>
</comment>
<sequence>MKVSAALLCLLLIAATFSPQGLAQPDAINAPVTCCYNFTNRKISVQRLASYRRITSSKCPKEAVIFKTIVAKEICADPKQKWVQDSMDHLDKQIQTPKP</sequence>
<protein>
    <recommendedName>
        <fullName>C-C motif chemokine 2</fullName>
    </recommendedName>
    <alternativeName>
        <fullName>Monocyte chemoattractant protein 1</fullName>
    </alternativeName>
    <alternativeName>
        <fullName>Monocyte chemotactic protein 1</fullName>
        <shortName>MCP-1</shortName>
    </alternativeName>
    <alternativeName>
        <fullName>Small-inducible cytokine A2</fullName>
    </alternativeName>
</protein>
<organism>
    <name type="scientific">Macaca fascicularis</name>
    <name type="common">Crab-eating macaque</name>
    <name type="synonym">Cynomolgus monkey</name>
    <dbReference type="NCBI Taxonomy" id="9541"/>
    <lineage>
        <taxon>Eukaryota</taxon>
        <taxon>Metazoa</taxon>
        <taxon>Chordata</taxon>
        <taxon>Craniata</taxon>
        <taxon>Vertebrata</taxon>
        <taxon>Euteleostomi</taxon>
        <taxon>Mammalia</taxon>
        <taxon>Eutheria</taxon>
        <taxon>Euarchontoglires</taxon>
        <taxon>Primates</taxon>
        <taxon>Haplorrhini</taxon>
        <taxon>Catarrhini</taxon>
        <taxon>Cercopithecidae</taxon>
        <taxon>Cercopithecinae</taxon>
        <taxon>Macaca</taxon>
    </lineage>
</organism>
<dbReference type="EMBL" id="AF276081">
    <property type="protein sequence ID" value="AAF81899.1"/>
    <property type="molecule type" value="mRNA"/>
</dbReference>
<dbReference type="RefSeq" id="NP_001271801.1">
    <property type="nucleotide sequence ID" value="NM_001284872.1"/>
</dbReference>
<dbReference type="RefSeq" id="XP_045231089.1">
    <property type="nucleotide sequence ID" value="XM_045375154.1"/>
</dbReference>
<dbReference type="SMR" id="P61274"/>
<dbReference type="STRING" id="9541.ENSMFAP00000024766"/>
<dbReference type="GlyCosmos" id="P61274">
    <property type="glycosylation" value="1 site, No reported glycans"/>
</dbReference>
<dbReference type="GeneID" id="102135739"/>
<dbReference type="VEuPathDB" id="HostDB:ENSMFAG00000043935"/>
<dbReference type="eggNOG" id="ENOG502S6ZP">
    <property type="taxonomic scope" value="Eukaryota"/>
</dbReference>
<dbReference type="OMA" id="PNQKWVK"/>
<dbReference type="Proteomes" id="UP000233100">
    <property type="component" value="Chromosome 16"/>
</dbReference>
<dbReference type="GO" id="GO:0005615">
    <property type="term" value="C:extracellular space"/>
    <property type="evidence" value="ECO:0007669"/>
    <property type="project" value="UniProtKB-KW"/>
</dbReference>
<dbReference type="GO" id="GO:0048020">
    <property type="term" value="F:CCR chemokine receptor binding"/>
    <property type="evidence" value="ECO:0007669"/>
    <property type="project" value="TreeGrafter"/>
</dbReference>
<dbReference type="GO" id="GO:0008009">
    <property type="term" value="F:chemokine activity"/>
    <property type="evidence" value="ECO:0007669"/>
    <property type="project" value="InterPro"/>
</dbReference>
<dbReference type="GO" id="GO:0061844">
    <property type="term" value="P:antimicrobial humoral immune response mediated by antimicrobial peptide"/>
    <property type="evidence" value="ECO:0007669"/>
    <property type="project" value="TreeGrafter"/>
</dbReference>
<dbReference type="GO" id="GO:0070098">
    <property type="term" value="P:chemokine-mediated signaling pathway"/>
    <property type="evidence" value="ECO:0007669"/>
    <property type="project" value="TreeGrafter"/>
</dbReference>
<dbReference type="GO" id="GO:0048245">
    <property type="term" value="P:eosinophil chemotaxis"/>
    <property type="evidence" value="ECO:0007669"/>
    <property type="project" value="TreeGrafter"/>
</dbReference>
<dbReference type="GO" id="GO:0006954">
    <property type="term" value="P:inflammatory response"/>
    <property type="evidence" value="ECO:0007669"/>
    <property type="project" value="UniProtKB-KW"/>
</dbReference>
<dbReference type="GO" id="GO:0030335">
    <property type="term" value="P:positive regulation of cell migration"/>
    <property type="evidence" value="ECO:0007669"/>
    <property type="project" value="TreeGrafter"/>
</dbReference>
<dbReference type="GO" id="GO:0051968">
    <property type="term" value="P:positive regulation of synaptic transmission, glutamatergic"/>
    <property type="evidence" value="ECO:0000250"/>
    <property type="project" value="UniProtKB"/>
</dbReference>
<dbReference type="GO" id="GO:0019233">
    <property type="term" value="P:sensory perception of pain"/>
    <property type="evidence" value="ECO:0000250"/>
    <property type="project" value="UniProtKB"/>
</dbReference>
<dbReference type="CDD" id="cd00272">
    <property type="entry name" value="Chemokine_CC"/>
    <property type="match status" value="1"/>
</dbReference>
<dbReference type="FunFam" id="2.40.50.40:FF:000002">
    <property type="entry name" value="C-C motif chemokine"/>
    <property type="match status" value="1"/>
</dbReference>
<dbReference type="Gene3D" id="2.40.50.40">
    <property type="match status" value="1"/>
</dbReference>
<dbReference type="InterPro" id="IPR039809">
    <property type="entry name" value="Chemokine_b/g/d"/>
</dbReference>
<dbReference type="InterPro" id="IPR000827">
    <property type="entry name" value="Chemokine_CC_CS"/>
</dbReference>
<dbReference type="InterPro" id="IPR001811">
    <property type="entry name" value="Chemokine_IL8-like_dom"/>
</dbReference>
<dbReference type="InterPro" id="IPR036048">
    <property type="entry name" value="Interleukin_8-like_sf"/>
</dbReference>
<dbReference type="PANTHER" id="PTHR12015:SF98">
    <property type="entry name" value="C-C MOTIF CHEMOKINE 2"/>
    <property type="match status" value="1"/>
</dbReference>
<dbReference type="PANTHER" id="PTHR12015">
    <property type="entry name" value="SMALL INDUCIBLE CYTOKINE A"/>
    <property type="match status" value="1"/>
</dbReference>
<dbReference type="Pfam" id="PF00048">
    <property type="entry name" value="IL8"/>
    <property type="match status" value="1"/>
</dbReference>
<dbReference type="SMART" id="SM00199">
    <property type="entry name" value="SCY"/>
    <property type="match status" value="1"/>
</dbReference>
<dbReference type="SUPFAM" id="SSF54117">
    <property type="entry name" value="Interleukin 8-like chemokines"/>
    <property type="match status" value="1"/>
</dbReference>
<dbReference type="PROSITE" id="PS00472">
    <property type="entry name" value="SMALL_CYTOKINES_CC"/>
    <property type="match status" value="1"/>
</dbReference>
<evidence type="ECO:0000250" key="1"/>
<evidence type="ECO:0000250" key="2">
    <source>
        <dbReference type="UniProtKB" id="P10148"/>
    </source>
</evidence>
<evidence type="ECO:0000250" key="3">
    <source>
        <dbReference type="UniProtKB" id="P13500"/>
    </source>
</evidence>
<evidence type="ECO:0000255" key="4"/>
<evidence type="ECO:0000305" key="5"/>
<reference key="1">
    <citation type="submission" date="2000-06" db="EMBL/GenBank/DDBJ databases">
        <title>Cloning and expression of cynomolgus monkey chemoattractant protein-1.</title>
        <authorList>
            <person name="Studer C."/>
            <person name="Urfer R."/>
        </authorList>
    </citation>
    <scope>NUCLEOTIDE SEQUENCE [MRNA]</scope>
</reference>